<dbReference type="EMBL" id="AM884177">
    <property type="protein sequence ID" value="CAP06674.1"/>
    <property type="molecule type" value="Genomic_DNA"/>
</dbReference>
<dbReference type="RefSeq" id="WP_009871373.1">
    <property type="nucleotide sequence ID" value="NC_010280.2"/>
</dbReference>
<dbReference type="SMR" id="B0BB12"/>
<dbReference type="KEGG" id="ctl:CTLon_0276"/>
<dbReference type="HOGENOM" id="CLU_100590_3_1_0"/>
<dbReference type="Proteomes" id="UP001154401">
    <property type="component" value="Chromosome"/>
</dbReference>
<dbReference type="GO" id="GO:0005737">
    <property type="term" value="C:cytoplasm"/>
    <property type="evidence" value="ECO:0007669"/>
    <property type="project" value="UniProtKB-ARBA"/>
</dbReference>
<dbReference type="GO" id="GO:0015935">
    <property type="term" value="C:small ribosomal subunit"/>
    <property type="evidence" value="ECO:0007669"/>
    <property type="project" value="TreeGrafter"/>
</dbReference>
<dbReference type="GO" id="GO:0003735">
    <property type="term" value="F:structural constituent of ribosome"/>
    <property type="evidence" value="ECO:0007669"/>
    <property type="project" value="InterPro"/>
</dbReference>
<dbReference type="GO" id="GO:0006412">
    <property type="term" value="P:translation"/>
    <property type="evidence" value="ECO:0007669"/>
    <property type="project" value="UniProtKB-UniRule"/>
</dbReference>
<dbReference type="FunFam" id="3.30.1320.10:FF:000015">
    <property type="entry name" value="30S ribosomal protein S16"/>
    <property type="match status" value="1"/>
</dbReference>
<dbReference type="Gene3D" id="3.30.1320.10">
    <property type="match status" value="1"/>
</dbReference>
<dbReference type="HAMAP" id="MF_00385">
    <property type="entry name" value="Ribosomal_bS16"/>
    <property type="match status" value="1"/>
</dbReference>
<dbReference type="InterPro" id="IPR000307">
    <property type="entry name" value="Ribosomal_bS16"/>
</dbReference>
<dbReference type="InterPro" id="IPR023803">
    <property type="entry name" value="Ribosomal_bS16_dom_sf"/>
</dbReference>
<dbReference type="NCBIfam" id="NF011095">
    <property type="entry name" value="PRK14522.1"/>
    <property type="match status" value="1"/>
</dbReference>
<dbReference type="NCBIfam" id="TIGR00002">
    <property type="entry name" value="S16"/>
    <property type="match status" value="1"/>
</dbReference>
<dbReference type="PANTHER" id="PTHR12919">
    <property type="entry name" value="30S RIBOSOMAL PROTEIN S16"/>
    <property type="match status" value="1"/>
</dbReference>
<dbReference type="PANTHER" id="PTHR12919:SF20">
    <property type="entry name" value="SMALL RIBOSOMAL SUBUNIT PROTEIN BS16M"/>
    <property type="match status" value="1"/>
</dbReference>
<dbReference type="Pfam" id="PF00886">
    <property type="entry name" value="Ribosomal_S16"/>
    <property type="match status" value="1"/>
</dbReference>
<dbReference type="SUPFAM" id="SSF54565">
    <property type="entry name" value="Ribosomal protein S16"/>
    <property type="match status" value="1"/>
</dbReference>
<accession>B0BB12</accession>
<keyword id="KW-0687">Ribonucleoprotein</keyword>
<keyword id="KW-0689">Ribosomal protein</keyword>
<protein>
    <recommendedName>
        <fullName evidence="1">Small ribosomal subunit protein bS16</fullName>
    </recommendedName>
    <alternativeName>
        <fullName evidence="2">30S ribosomal protein S16</fullName>
    </alternativeName>
</protein>
<comment type="similarity">
    <text evidence="1">Belongs to the bacterial ribosomal protein bS16 family.</text>
</comment>
<proteinExistence type="inferred from homology"/>
<name>RS16_CHLTB</name>
<sequence length="116" mass="13410">MALKIRLRQQGRKNHVVYRLVLADVESPRDGKYIELLGWYDPHSEQNYQLKSERIFYWLNQGAELTEKAGALVKQGAPGVYAELMAKKVARRAVVRQKRRAYRQRLAARKAEAAAK</sequence>
<organism>
    <name type="scientific">Chlamydia trachomatis serovar L2b (strain UCH-1/proctitis)</name>
    <dbReference type="NCBI Taxonomy" id="471473"/>
    <lineage>
        <taxon>Bacteria</taxon>
        <taxon>Pseudomonadati</taxon>
        <taxon>Chlamydiota</taxon>
        <taxon>Chlamydiia</taxon>
        <taxon>Chlamydiales</taxon>
        <taxon>Chlamydiaceae</taxon>
        <taxon>Chlamydia/Chlamydophila group</taxon>
        <taxon>Chlamydia</taxon>
    </lineage>
</organism>
<reference key="1">
    <citation type="journal article" date="2008" name="Genome Res.">
        <title>Chlamydia trachomatis: genome sequence analysis of lymphogranuloma venereum isolates.</title>
        <authorList>
            <person name="Thomson N.R."/>
            <person name="Holden M.T.G."/>
            <person name="Carder C."/>
            <person name="Lennard N."/>
            <person name="Lockey S.J."/>
            <person name="Marsh P."/>
            <person name="Skipp P."/>
            <person name="O'Connor C.D."/>
            <person name="Goodhead I."/>
            <person name="Norbertzcak H."/>
            <person name="Harris B."/>
            <person name="Ormond D."/>
            <person name="Rance R."/>
            <person name="Quail M.A."/>
            <person name="Parkhill J."/>
            <person name="Stephens R.S."/>
            <person name="Clarke I.N."/>
        </authorList>
    </citation>
    <scope>NUCLEOTIDE SEQUENCE [LARGE SCALE GENOMIC DNA]</scope>
    <source>
        <strain>UCH-1/proctitis</strain>
    </source>
</reference>
<gene>
    <name evidence="1" type="primary">rpsP</name>
    <name type="ordered locus">CTLon_0276</name>
</gene>
<feature type="chain" id="PRO_1000196361" description="Small ribosomal subunit protein bS16">
    <location>
        <begin position="1"/>
        <end position="116"/>
    </location>
</feature>
<evidence type="ECO:0000255" key="1">
    <source>
        <dbReference type="HAMAP-Rule" id="MF_00385"/>
    </source>
</evidence>
<evidence type="ECO:0000305" key="2"/>